<evidence type="ECO:0000255" key="1">
    <source>
        <dbReference type="HAMAP-Rule" id="MF_03115"/>
    </source>
</evidence>
<keyword id="KW-0001">2Fe-2S</keyword>
<keyword id="KW-0004">4Fe-4S</keyword>
<keyword id="KW-0963">Cytoplasm</keyword>
<keyword id="KW-0408">Iron</keyword>
<keyword id="KW-0411">Iron-sulfur</keyword>
<keyword id="KW-0479">Metal-binding</keyword>
<keyword id="KW-0496">Mitochondrion</keyword>
<organism>
    <name type="scientific">Schistosoma japonicum</name>
    <name type="common">Blood fluke</name>
    <dbReference type="NCBI Taxonomy" id="6182"/>
    <lineage>
        <taxon>Eukaryota</taxon>
        <taxon>Metazoa</taxon>
        <taxon>Spiralia</taxon>
        <taxon>Lophotrochozoa</taxon>
        <taxon>Platyhelminthes</taxon>
        <taxon>Trematoda</taxon>
        <taxon>Digenea</taxon>
        <taxon>Strigeidida</taxon>
        <taxon>Schistosomatoidea</taxon>
        <taxon>Schistosomatidae</taxon>
        <taxon>Schistosoma</taxon>
    </lineage>
</organism>
<sequence>MEPYVVDNLNRDDCVMIVWSGEVQDDVMCDLKAAVSTHVKKLHFENLENFTNSSTISSQFHGCSSVILCGWPNPININTLERGLLSNLSSCLQPGGRLICRESTMEDWNSFRKNLTLSGYVNPYQLPGGNHLIFIAFVPSNYTRGSSIKLPWAHSDIEAAWENVDNETSYDVDKNLINTNSLLQKSDYVTPLAACGQEFAKNSIGKRKRACKNCTCGLAEIEATEVEDKSVVSISSCGNCYLGDAFRCSTCPYRGLPPFKPGDRILIPDDVLKADL</sequence>
<name>DRE2_SCHJA</name>
<reference key="1">
    <citation type="journal article" date="2003" name="Nat. Genet.">
        <title>Evolutionary and biomedical implications of a Schistosoma japonicum complementary DNA resource.</title>
        <authorList>
            <person name="Hu W."/>
            <person name="Yan Q."/>
            <person name="Shen D.K."/>
            <person name="Liu F."/>
            <person name="Zhu Z.D."/>
            <person name="Song H.D."/>
            <person name="Xu X.R."/>
            <person name="Wang Z.J."/>
            <person name="Rong Y.P."/>
            <person name="Zeng L.C."/>
            <person name="Wu J."/>
            <person name="Zhang X."/>
            <person name="Wang J.J."/>
            <person name="Xu X.N."/>
            <person name="Wang S.Y."/>
            <person name="Fu G."/>
            <person name="Zhang X.L."/>
            <person name="Wang Z.Q."/>
            <person name="Brindley P.J."/>
            <person name="McManus D.P."/>
            <person name="Xue C.L."/>
            <person name="Feng Z."/>
            <person name="Chen Z."/>
            <person name="Han Z.G."/>
        </authorList>
    </citation>
    <scope>NUCLEOTIDE SEQUENCE [LARGE SCALE MRNA]</scope>
</reference>
<proteinExistence type="evidence at transcript level"/>
<dbReference type="EMBL" id="AY223353">
    <property type="protein sequence ID" value="AAP06390.1"/>
    <property type="molecule type" value="mRNA"/>
</dbReference>
<dbReference type="GO" id="GO:0005758">
    <property type="term" value="C:mitochondrial intermembrane space"/>
    <property type="evidence" value="ECO:0007669"/>
    <property type="project" value="UniProtKB-SubCell"/>
</dbReference>
<dbReference type="GO" id="GO:0051537">
    <property type="term" value="F:2 iron, 2 sulfur cluster binding"/>
    <property type="evidence" value="ECO:0007669"/>
    <property type="project" value="UniProtKB-UniRule"/>
</dbReference>
<dbReference type="GO" id="GO:0051539">
    <property type="term" value="F:4 iron, 4 sulfur cluster binding"/>
    <property type="evidence" value="ECO:0007669"/>
    <property type="project" value="UniProtKB-KW"/>
</dbReference>
<dbReference type="GO" id="GO:0009055">
    <property type="term" value="F:electron transfer activity"/>
    <property type="evidence" value="ECO:0007669"/>
    <property type="project" value="UniProtKB-UniRule"/>
</dbReference>
<dbReference type="GO" id="GO:0046872">
    <property type="term" value="F:metal ion binding"/>
    <property type="evidence" value="ECO:0007669"/>
    <property type="project" value="UniProtKB-KW"/>
</dbReference>
<dbReference type="GO" id="GO:0016226">
    <property type="term" value="P:iron-sulfur cluster assembly"/>
    <property type="evidence" value="ECO:0007669"/>
    <property type="project" value="UniProtKB-UniRule"/>
</dbReference>
<dbReference type="Gene3D" id="3.40.50.150">
    <property type="entry name" value="Vaccinia Virus protein VP39"/>
    <property type="match status" value="1"/>
</dbReference>
<dbReference type="HAMAP" id="MF_03115">
    <property type="entry name" value="Anamorsin"/>
    <property type="match status" value="1"/>
</dbReference>
<dbReference type="InterPro" id="IPR007785">
    <property type="entry name" value="Anamorsin"/>
</dbReference>
<dbReference type="InterPro" id="IPR046408">
    <property type="entry name" value="CIAPIN1"/>
</dbReference>
<dbReference type="InterPro" id="IPR029063">
    <property type="entry name" value="SAM-dependent_MTases_sf"/>
</dbReference>
<dbReference type="PANTHER" id="PTHR13273">
    <property type="entry name" value="ANAMORSIN"/>
    <property type="match status" value="1"/>
</dbReference>
<dbReference type="PANTHER" id="PTHR13273:SF14">
    <property type="entry name" value="ANAMORSIN"/>
    <property type="match status" value="1"/>
</dbReference>
<dbReference type="Pfam" id="PF05093">
    <property type="entry name" value="CIAPIN1"/>
    <property type="match status" value="2"/>
</dbReference>
<dbReference type="SUPFAM" id="SSF53335">
    <property type="entry name" value="S-adenosyl-L-methionine-dependent methyltransferases"/>
    <property type="match status" value="1"/>
</dbReference>
<feature type="chain" id="PRO_0000392330" description="Anamorsin homolog">
    <location>
        <begin position="1"/>
        <end position="276"/>
    </location>
</feature>
<feature type="region of interest" description="N-terminal SAM-like domain" evidence="1">
    <location>
        <begin position="1"/>
        <end position="152"/>
    </location>
</feature>
<feature type="region of interest" description="Linker" evidence="1">
    <location>
        <begin position="152"/>
        <end position="189"/>
    </location>
</feature>
<feature type="region of interest" description="Fe-S binding site A" evidence="1">
    <location>
        <begin position="195"/>
        <end position="216"/>
    </location>
</feature>
<feature type="region of interest" description="Fe-S binding site B" evidence="1">
    <location>
        <begin position="237"/>
        <end position="251"/>
    </location>
</feature>
<feature type="short sequence motif" description="Cx2C motif 1" evidence="1">
    <location>
        <begin position="237"/>
        <end position="240"/>
    </location>
</feature>
<feature type="short sequence motif" description="Cx2C motif 2" evidence="1">
    <location>
        <begin position="248"/>
        <end position="251"/>
    </location>
</feature>
<feature type="binding site" evidence="1">
    <location>
        <position position="195"/>
    </location>
    <ligand>
        <name>[2Fe-2S] cluster</name>
        <dbReference type="ChEBI" id="CHEBI:190135"/>
    </ligand>
</feature>
<feature type="binding site" evidence="1">
    <location>
        <position position="211"/>
    </location>
    <ligand>
        <name>[2Fe-2S] cluster</name>
        <dbReference type="ChEBI" id="CHEBI:190135"/>
    </ligand>
</feature>
<feature type="binding site" evidence="1">
    <location>
        <position position="214"/>
    </location>
    <ligand>
        <name>[2Fe-2S] cluster</name>
        <dbReference type="ChEBI" id="CHEBI:190135"/>
    </ligand>
</feature>
<feature type="binding site" evidence="1">
    <location>
        <position position="216"/>
    </location>
    <ligand>
        <name>[2Fe-2S] cluster</name>
        <dbReference type="ChEBI" id="CHEBI:190135"/>
    </ligand>
</feature>
<feature type="binding site" evidence="1">
    <location>
        <position position="237"/>
    </location>
    <ligand>
        <name>[4Fe-4S] cluster</name>
        <dbReference type="ChEBI" id="CHEBI:49883"/>
    </ligand>
</feature>
<feature type="binding site" evidence="1">
    <location>
        <position position="240"/>
    </location>
    <ligand>
        <name>[4Fe-4S] cluster</name>
        <dbReference type="ChEBI" id="CHEBI:49883"/>
    </ligand>
</feature>
<feature type="binding site" evidence="1">
    <location>
        <position position="248"/>
    </location>
    <ligand>
        <name>[4Fe-4S] cluster</name>
        <dbReference type="ChEBI" id="CHEBI:49883"/>
    </ligand>
</feature>
<feature type="binding site" evidence="1">
    <location>
        <position position="251"/>
    </location>
    <ligand>
        <name>[4Fe-4S] cluster</name>
        <dbReference type="ChEBI" id="CHEBI:49883"/>
    </ligand>
</feature>
<accession>Q86E67</accession>
<comment type="function">
    <text evidence="1">Component of the cytosolic iron-sulfur (Fe-S) protein assembly (CIA) machinery. Required for the maturation of extramitochondrial Fe-S proteins. Part of an electron transfer chain functioning in an early step of cytosolic Fe-S biogenesis, facilitating the de novo assembly of a [4Fe-4S] cluster on the cytosolic Fe-S scaffold complex. Electrons are transferred from NADPH via a FAD- and FMN-containing diflavin oxidoreductase. Together with the diflavin oxidoreductase, also required for the assembly of the diferric tyrosyl radical cofactor of ribonucleotide reductase (RNR), probably by providing electrons for reduction during radical cofactor maturation in the catalytic small subunit.</text>
</comment>
<comment type="cofactor">
    <cofactor evidence="1">
        <name>[2Fe-2S] cluster</name>
        <dbReference type="ChEBI" id="CHEBI:190135"/>
    </cofactor>
</comment>
<comment type="cofactor">
    <cofactor evidence="1">
        <name>[4Fe-4S] cluster</name>
        <dbReference type="ChEBI" id="CHEBI:49883"/>
    </cofactor>
</comment>
<comment type="subunit">
    <text evidence="1">Monomer.</text>
</comment>
<comment type="subcellular location">
    <subcellularLocation>
        <location evidence="1">Cytoplasm</location>
    </subcellularLocation>
    <subcellularLocation>
        <location evidence="1">Mitochondrion intermembrane space</location>
    </subcellularLocation>
</comment>
<comment type="domain">
    <text evidence="1">The C-terminal domain binds 2 Fe-S clusters but is otherwise mostly in an intrinsically disordered conformation.</text>
</comment>
<comment type="domain">
    <text evidence="1">The N-terminal domain has structural similarity with S-adenosyl-L-methionine-dependent methyltransferases, but does not bind S-adenosyl-L-methionine. It is required for correct assembly of the 2 Fe-S clusters.</text>
</comment>
<comment type="domain">
    <text evidence="1">The twin Cx2C motifs are involved in the recognition by the mitochondrial MIA40-ERV1 disulfide relay system. The formation of 2 disulfide bonds in the Cx2C motifs through dithiol/disulfide exchange reactions effectively traps the protein in the mitochondrial intermembrane space.</text>
</comment>
<comment type="similarity">
    <text evidence="1">Belongs to the anamorsin family.</text>
</comment>
<protein>
    <recommendedName>
        <fullName evidence="1">Anamorsin homolog</fullName>
    </recommendedName>
    <alternativeName>
        <fullName evidence="1">Fe-S cluster assembly protein DRE2 homolog</fullName>
    </alternativeName>
</protein>
<gene>
    <name type="ORF">SJCHGC06006</name>
</gene>